<keyword id="KW-0997">Cell inner membrane</keyword>
<keyword id="KW-1003">Cell membrane</keyword>
<keyword id="KW-0472">Membrane</keyword>
<keyword id="KW-0812">Transmembrane</keyword>
<keyword id="KW-1133">Transmembrane helix</keyword>
<dbReference type="EMBL" id="CP000409">
    <property type="protein sequence ID" value="ABV73621.1"/>
    <property type="molecule type" value="Genomic_DNA"/>
</dbReference>
<dbReference type="RefSeq" id="WP_012148816.1">
    <property type="nucleotide sequence ID" value="NC_009879.1"/>
</dbReference>
<dbReference type="SMR" id="A8EZ38"/>
<dbReference type="STRING" id="293613.A1E_03430"/>
<dbReference type="KEGG" id="rcm:A1E_03430"/>
<dbReference type="eggNOG" id="COG2917">
    <property type="taxonomic scope" value="Bacteria"/>
</dbReference>
<dbReference type="HOGENOM" id="CLU_089554_1_1_5"/>
<dbReference type="Proteomes" id="UP000007056">
    <property type="component" value="Chromosome"/>
</dbReference>
<dbReference type="GO" id="GO:0005886">
    <property type="term" value="C:plasma membrane"/>
    <property type="evidence" value="ECO:0007669"/>
    <property type="project" value="UniProtKB-SubCell"/>
</dbReference>
<dbReference type="HAMAP" id="MF_00189">
    <property type="entry name" value="YciB"/>
    <property type="match status" value="1"/>
</dbReference>
<dbReference type="InterPro" id="IPR006008">
    <property type="entry name" value="YciB"/>
</dbReference>
<dbReference type="NCBIfam" id="TIGR00997">
    <property type="entry name" value="ispZ"/>
    <property type="match status" value="1"/>
</dbReference>
<dbReference type="NCBIfam" id="NF001323">
    <property type="entry name" value="PRK00259.1-1"/>
    <property type="match status" value="1"/>
</dbReference>
<dbReference type="PANTHER" id="PTHR36917:SF1">
    <property type="entry name" value="INNER MEMBRANE-SPANNING PROTEIN YCIB"/>
    <property type="match status" value="1"/>
</dbReference>
<dbReference type="PANTHER" id="PTHR36917">
    <property type="entry name" value="INTRACELLULAR SEPTATION PROTEIN A-RELATED"/>
    <property type="match status" value="1"/>
</dbReference>
<dbReference type="Pfam" id="PF04279">
    <property type="entry name" value="IspA"/>
    <property type="match status" value="1"/>
</dbReference>
<accession>A8EZ38</accession>
<evidence type="ECO:0000255" key="1">
    <source>
        <dbReference type="HAMAP-Rule" id="MF_00189"/>
    </source>
</evidence>
<reference key="1">
    <citation type="submission" date="2007-09" db="EMBL/GenBank/DDBJ databases">
        <title>Complete genome sequence of Rickettsia canadensis.</title>
        <authorList>
            <person name="Madan A."/>
            <person name="Fahey J."/>
            <person name="Helton E."/>
            <person name="Ketteman M."/>
            <person name="Madan A."/>
            <person name="Rodrigues S."/>
            <person name="Sanchez A."/>
            <person name="Whiting M."/>
            <person name="Dasch G."/>
            <person name="Eremeeva M."/>
        </authorList>
    </citation>
    <scope>NUCLEOTIDE SEQUENCE [LARGE SCALE GENOMIC DNA]</scope>
    <source>
        <strain>McKiel</strain>
    </source>
</reference>
<feature type="chain" id="PRO_1000021051" description="Inner membrane-spanning protein YciB">
    <location>
        <begin position="1"/>
        <end position="180"/>
    </location>
</feature>
<feature type="transmembrane region" description="Helical" evidence="1">
    <location>
        <begin position="25"/>
        <end position="45"/>
    </location>
</feature>
<feature type="transmembrane region" description="Helical" evidence="1">
    <location>
        <begin position="54"/>
        <end position="74"/>
    </location>
</feature>
<feature type="transmembrane region" description="Helical" evidence="1">
    <location>
        <begin position="76"/>
        <end position="96"/>
    </location>
</feature>
<feature type="transmembrane region" description="Helical" evidence="1">
    <location>
        <begin position="118"/>
        <end position="138"/>
    </location>
</feature>
<feature type="transmembrane region" description="Helical" evidence="1">
    <location>
        <begin position="150"/>
        <end position="170"/>
    </location>
</feature>
<name>YCIB_RICCK</name>
<protein>
    <recommendedName>
        <fullName evidence="1">Inner membrane-spanning protein YciB</fullName>
    </recommendedName>
</protein>
<sequence length="180" mass="20398">MLKLLSEIGPVIAFFAGFFYGGGIQNATLYMLITAIICVTICYFVDKKVSKLSIISVSVLLVSGIITLISGNSIYIKIKPTILYVIFGIIFLMSGIRKNPFIKYALESIVRLKEESWITLSYRAAAFFFFMAVVNEIVWRNFSDETWVKFKVFGVIPITFIFILLQLPLLLKNKLPDSKI</sequence>
<proteinExistence type="inferred from homology"/>
<organism>
    <name type="scientific">Rickettsia canadensis (strain McKiel)</name>
    <dbReference type="NCBI Taxonomy" id="293613"/>
    <lineage>
        <taxon>Bacteria</taxon>
        <taxon>Pseudomonadati</taxon>
        <taxon>Pseudomonadota</taxon>
        <taxon>Alphaproteobacteria</taxon>
        <taxon>Rickettsiales</taxon>
        <taxon>Rickettsiaceae</taxon>
        <taxon>Rickettsieae</taxon>
        <taxon>Rickettsia</taxon>
        <taxon>belli group</taxon>
    </lineage>
</organism>
<comment type="function">
    <text evidence="1">Plays a role in cell envelope biogenesis, maintenance of cell envelope integrity and membrane homeostasis.</text>
</comment>
<comment type="subcellular location">
    <subcellularLocation>
        <location evidence="1">Cell inner membrane</location>
        <topology evidence="1">Multi-pass membrane protein</topology>
    </subcellularLocation>
</comment>
<comment type="similarity">
    <text evidence="1">Belongs to the YciB family.</text>
</comment>
<gene>
    <name evidence="1" type="primary">yciB</name>
    <name type="ordered locus">A1E_03430</name>
</gene>